<accession>E0VI98</accession>
<evidence type="ECO:0000255" key="1">
    <source>
        <dbReference type="HAMAP-Rule" id="MF_03153"/>
    </source>
</evidence>
<evidence type="ECO:0000256" key="2">
    <source>
        <dbReference type="SAM" id="MobiDB-lite"/>
    </source>
</evidence>
<feature type="chain" id="PRO_0000414264" description="U1 small nuclear ribonucleoprotein C">
    <location>
        <begin position="1"/>
        <end position="173"/>
    </location>
</feature>
<feature type="zinc finger region" description="Matrin-type" evidence="1">
    <location>
        <begin position="4"/>
        <end position="36"/>
    </location>
</feature>
<feature type="region of interest" description="Disordered" evidence="2">
    <location>
        <begin position="72"/>
        <end position="100"/>
    </location>
</feature>
<feature type="compositionally biased region" description="Pro residues" evidence="2">
    <location>
        <begin position="73"/>
        <end position="94"/>
    </location>
</feature>
<keyword id="KW-0479">Metal-binding</keyword>
<keyword id="KW-0539">Nucleus</keyword>
<keyword id="KW-1185">Reference proteome</keyword>
<keyword id="KW-0687">Ribonucleoprotein</keyword>
<keyword id="KW-0694">RNA-binding</keyword>
<keyword id="KW-0862">Zinc</keyword>
<keyword id="KW-0863">Zinc-finger</keyword>
<reference key="1">
    <citation type="journal article" date="2010" name="Proc. Natl. Acad. Sci. U.S.A.">
        <title>Genome sequences of the human body louse and its primary endosymbiont provide insights into the permanent parasitic lifestyle.</title>
        <authorList>
            <person name="Kirkness E.F."/>
            <person name="Haas B.J."/>
            <person name="Sun W."/>
            <person name="Braig H.R."/>
            <person name="Perotti M.A."/>
            <person name="Clark J.M."/>
            <person name="Lee S.H."/>
            <person name="Robertson H.M."/>
            <person name="Kennedy R.C."/>
            <person name="Elhaik E."/>
            <person name="Gerlach D."/>
            <person name="Kriventseva E.V."/>
            <person name="Elsik C.G."/>
            <person name="Graur D."/>
            <person name="Hill C.A."/>
            <person name="Veenstra J.A."/>
            <person name="Walenz B."/>
            <person name="Tubio J.M."/>
            <person name="Ribeiro J.M."/>
            <person name="Rozas J."/>
            <person name="Johnston J.S."/>
            <person name="Reese J.T."/>
            <person name="Popadic A."/>
            <person name="Tojo M."/>
            <person name="Raoult D."/>
            <person name="Reed D.L."/>
            <person name="Tomoyasu Y."/>
            <person name="Krause E."/>
            <person name="Mittapalli O."/>
            <person name="Margam V.M."/>
            <person name="Li H.M."/>
            <person name="Meyer J.M."/>
            <person name="Johnson R.M."/>
            <person name="Romero-Severson J."/>
            <person name="Vanzee J.P."/>
            <person name="Alvarez-Ponce D."/>
            <person name="Vieira F.G."/>
            <person name="Aguade M."/>
            <person name="Guirao-Rico S."/>
            <person name="Anzola J.M."/>
            <person name="Yoon K.S."/>
            <person name="Strycharz J.P."/>
            <person name="Unger M.F."/>
            <person name="Christley S."/>
            <person name="Lobo N.F."/>
            <person name="Seufferheld M.J."/>
            <person name="Wang N."/>
            <person name="Dasch G.A."/>
            <person name="Struchiner C.J."/>
            <person name="Madey G."/>
            <person name="Hannick L.I."/>
            <person name="Bidwell S."/>
            <person name="Joardar V."/>
            <person name="Caler E."/>
            <person name="Shao R."/>
            <person name="Barker S.C."/>
            <person name="Cameron S."/>
            <person name="Bruggner R.V."/>
            <person name="Regier A."/>
            <person name="Johnson J."/>
            <person name="Viswanathan L."/>
            <person name="Utterback T.R."/>
            <person name="Sutton G.G."/>
            <person name="Lawson D."/>
            <person name="Waterhouse R.M."/>
            <person name="Venter J.C."/>
            <person name="Strausberg R.L."/>
            <person name="Berenbaum M.R."/>
            <person name="Collins F.H."/>
            <person name="Zdobnov E.M."/>
            <person name="Pittendrigh B.R."/>
        </authorList>
    </citation>
    <scope>NUCLEOTIDE SEQUENCE [LARGE SCALE GENOMIC DNA]</scope>
    <source>
        <strain>USDA</strain>
    </source>
</reference>
<comment type="function">
    <text evidence="1">Component of the spliceosomal U1 snRNP, which is essential for recognition of the pre-mRNA 5' splice-site and the subsequent assembly of the spliceosome. U1-C is directly involved in initial 5' splice-site recognition for both constitutive and regulated alternative splicing. The interaction with the 5' splice-site seems to precede base-pairing between the pre-mRNA and the U1 snRNA. Stimulates commitment or early (E) complex formation by stabilizing the base pairing of the 5' end of the U1 snRNA and the 5' splice-site region.</text>
</comment>
<comment type="subunit">
    <text evidence="1">U1 snRNP is composed of the 7 core Sm proteins B/B', D1, D2, D3, E, F and G that assemble in a heptameric protein ring on the Sm site of the small nuclear RNA to form the core snRNP, and at least 3 U1 snRNP-specific proteins U1-70K, U1-A and U1-C. U1-C interacts with U1 snRNA and the 5' splice-site region of the pre-mRNA.</text>
</comment>
<comment type="subcellular location">
    <subcellularLocation>
        <location evidence="1">Nucleus</location>
    </subcellularLocation>
</comment>
<comment type="similarity">
    <text evidence="1">Belongs to the U1 small nuclear ribonucleoprotein C family.</text>
</comment>
<name>RU1C_PEDHC</name>
<proteinExistence type="inferred from homology"/>
<protein>
    <recommendedName>
        <fullName evidence="1">U1 small nuclear ribonucleoprotein C</fullName>
        <shortName evidence="1">U1 snRNP C</shortName>
        <shortName evidence="1">U1-C</shortName>
        <shortName evidence="1">U1C</shortName>
    </recommendedName>
</protein>
<sequence length="173" mass="18547">MPKYYCDYCDTYLTHDSPSVRKTHCQGRKHKDNVKFYYQKWMEEQAQHLIDATTAAFKAGKIANPFAPKPGAAIPPPANMQGPPRPVPPGPMGPGPNMLGPGPMGPMGPMMMGPNGPIRGPMAGPIMGPMGPMMGPMGHMGPMMGPIGGPMMSPMRPIMTNMPQPGQPPRAKE</sequence>
<gene>
    <name type="ORF">PHUM222080</name>
</gene>
<dbReference type="EMBL" id="DS235184">
    <property type="protein sequence ID" value="EEB13104.1"/>
    <property type="molecule type" value="Genomic_DNA"/>
</dbReference>
<dbReference type="RefSeq" id="XP_002425842.1">
    <property type="nucleotide sequence ID" value="XM_002425797.1"/>
</dbReference>
<dbReference type="SMR" id="E0VI98"/>
<dbReference type="STRING" id="121224.E0VI98"/>
<dbReference type="EnsemblMetazoa" id="PHUM222080-RA">
    <property type="protein sequence ID" value="PHUM222080-PA"/>
    <property type="gene ID" value="PHUM222080"/>
</dbReference>
<dbReference type="KEGG" id="phu:Phum_PHUM222080"/>
<dbReference type="CTD" id="8237870"/>
<dbReference type="VEuPathDB" id="VectorBase:PHUM222080"/>
<dbReference type="eggNOG" id="KOG3454">
    <property type="taxonomic scope" value="Eukaryota"/>
</dbReference>
<dbReference type="HOGENOM" id="CLU_079697_3_0_1"/>
<dbReference type="InParanoid" id="E0VI98"/>
<dbReference type="OMA" id="QMRPPLM"/>
<dbReference type="OrthoDB" id="76567at2759"/>
<dbReference type="Proteomes" id="UP000009046">
    <property type="component" value="Unassembled WGS sequence"/>
</dbReference>
<dbReference type="GO" id="GO:0000243">
    <property type="term" value="C:commitment complex"/>
    <property type="evidence" value="ECO:0007669"/>
    <property type="project" value="UniProtKB-UniRule"/>
</dbReference>
<dbReference type="GO" id="GO:0005685">
    <property type="term" value="C:U1 snRNP"/>
    <property type="evidence" value="ECO:0007669"/>
    <property type="project" value="UniProtKB-UniRule"/>
</dbReference>
<dbReference type="GO" id="GO:0071004">
    <property type="term" value="C:U2-type prespliceosome"/>
    <property type="evidence" value="ECO:0007669"/>
    <property type="project" value="UniProtKB-UniRule"/>
</dbReference>
<dbReference type="GO" id="GO:0003729">
    <property type="term" value="F:mRNA binding"/>
    <property type="evidence" value="ECO:0007669"/>
    <property type="project" value="UniProtKB-UniRule"/>
</dbReference>
<dbReference type="GO" id="GO:0030627">
    <property type="term" value="F:pre-mRNA 5'-splice site binding"/>
    <property type="evidence" value="ECO:0007669"/>
    <property type="project" value="InterPro"/>
</dbReference>
<dbReference type="GO" id="GO:0030619">
    <property type="term" value="F:U1 snRNA binding"/>
    <property type="evidence" value="ECO:0007669"/>
    <property type="project" value="UniProtKB-UniRule"/>
</dbReference>
<dbReference type="GO" id="GO:0008270">
    <property type="term" value="F:zinc ion binding"/>
    <property type="evidence" value="ECO:0007669"/>
    <property type="project" value="UniProtKB-UniRule"/>
</dbReference>
<dbReference type="GO" id="GO:0000395">
    <property type="term" value="P:mRNA 5'-splice site recognition"/>
    <property type="evidence" value="ECO:0007669"/>
    <property type="project" value="UniProtKB-UniRule"/>
</dbReference>
<dbReference type="GO" id="GO:0000387">
    <property type="term" value="P:spliceosomal snRNP assembly"/>
    <property type="evidence" value="ECO:0007669"/>
    <property type="project" value="UniProtKB-UniRule"/>
</dbReference>
<dbReference type="FunFam" id="3.30.160.60:FF:000059">
    <property type="entry name" value="U1 small nuclear ribonucleoprotein C"/>
    <property type="match status" value="1"/>
</dbReference>
<dbReference type="Gene3D" id="3.30.160.60">
    <property type="entry name" value="Classic Zinc Finger"/>
    <property type="match status" value="1"/>
</dbReference>
<dbReference type="HAMAP" id="MF_03153">
    <property type="entry name" value="U1_C"/>
    <property type="match status" value="1"/>
</dbReference>
<dbReference type="InterPro" id="IPR000690">
    <property type="entry name" value="Matrin/U1-C_Znf_C2H2"/>
</dbReference>
<dbReference type="InterPro" id="IPR003604">
    <property type="entry name" value="Matrin/U1-like-C_Znf_C2H2"/>
</dbReference>
<dbReference type="InterPro" id="IPR013085">
    <property type="entry name" value="U1-CZ_Znf_C2H2"/>
</dbReference>
<dbReference type="InterPro" id="IPR017340">
    <property type="entry name" value="U1_snRNP-C"/>
</dbReference>
<dbReference type="InterPro" id="IPR036236">
    <property type="entry name" value="Znf_C2H2_sf"/>
</dbReference>
<dbReference type="PANTHER" id="PTHR31148">
    <property type="entry name" value="U1 SMALL NUCLEAR RIBONUCLEOPROTEIN C"/>
    <property type="match status" value="1"/>
</dbReference>
<dbReference type="PANTHER" id="PTHR31148:SF1">
    <property type="entry name" value="U1 SMALL NUCLEAR RIBONUCLEOPROTEIN C"/>
    <property type="match status" value="1"/>
</dbReference>
<dbReference type="Pfam" id="PF06220">
    <property type="entry name" value="zf-U1"/>
    <property type="match status" value="1"/>
</dbReference>
<dbReference type="PIRSF" id="PIRSF037969">
    <property type="entry name" value="U1_snRNP-C"/>
    <property type="match status" value="1"/>
</dbReference>
<dbReference type="SMART" id="SM00451">
    <property type="entry name" value="ZnF_U1"/>
    <property type="match status" value="1"/>
</dbReference>
<dbReference type="SUPFAM" id="SSF57667">
    <property type="entry name" value="beta-beta-alpha zinc fingers"/>
    <property type="match status" value="1"/>
</dbReference>
<dbReference type="PROSITE" id="PS50171">
    <property type="entry name" value="ZF_MATRIN"/>
    <property type="match status" value="1"/>
</dbReference>
<organism>
    <name type="scientific">Pediculus humanus subsp. corporis</name>
    <name type="common">Body louse</name>
    <dbReference type="NCBI Taxonomy" id="121224"/>
    <lineage>
        <taxon>Eukaryota</taxon>
        <taxon>Metazoa</taxon>
        <taxon>Ecdysozoa</taxon>
        <taxon>Arthropoda</taxon>
        <taxon>Hexapoda</taxon>
        <taxon>Insecta</taxon>
        <taxon>Pterygota</taxon>
        <taxon>Neoptera</taxon>
        <taxon>Paraneoptera</taxon>
        <taxon>Psocodea</taxon>
        <taxon>Phthiraptera</taxon>
        <taxon>Anoplura</taxon>
        <taxon>Pediculidae</taxon>
        <taxon>Pediculus</taxon>
    </lineage>
</organism>